<proteinExistence type="inferred from homology"/>
<protein>
    <recommendedName>
        <fullName>Phosphatidate cytidylyltransferase</fullName>
        <ecNumber>2.7.7.41</ecNumber>
    </recommendedName>
    <alternativeName>
        <fullName>CDP-DAG synthase</fullName>
    </alternativeName>
    <alternativeName>
        <fullName>CDP-DG synthase</fullName>
    </alternativeName>
    <alternativeName>
        <fullName>CDP-diacylglycerol synthase</fullName>
        <shortName>CDS</shortName>
    </alternativeName>
    <alternativeName>
        <fullName>CDP-diglyceride pyrophosphorylase</fullName>
    </alternativeName>
    <alternativeName>
        <fullName>CDP-diglyceride synthase</fullName>
    </alternativeName>
    <alternativeName>
        <fullName>CTP:phosphatidate cytidylyltransferase</fullName>
    </alternativeName>
</protein>
<comment type="catalytic activity">
    <reaction>
        <text>a 1,2-diacyl-sn-glycero-3-phosphate + CTP + H(+) = a CDP-1,2-diacyl-sn-glycerol + diphosphate</text>
        <dbReference type="Rhea" id="RHEA:16229"/>
        <dbReference type="ChEBI" id="CHEBI:15378"/>
        <dbReference type="ChEBI" id="CHEBI:33019"/>
        <dbReference type="ChEBI" id="CHEBI:37563"/>
        <dbReference type="ChEBI" id="CHEBI:58332"/>
        <dbReference type="ChEBI" id="CHEBI:58608"/>
        <dbReference type="EC" id="2.7.7.41"/>
    </reaction>
</comment>
<comment type="pathway">
    <text>Phospholipid metabolism; CDP-diacylglycerol biosynthesis; CDP-diacylglycerol from sn-glycerol 3-phosphate: step 3/3.</text>
</comment>
<comment type="subcellular location">
    <subcellularLocation>
        <location evidence="1">Cell inner membrane</location>
        <topology evidence="1">Multi-pass membrane protein</topology>
    </subcellularLocation>
</comment>
<comment type="similarity">
    <text evidence="3">Belongs to the CDS family.</text>
</comment>
<reference key="1">
    <citation type="journal article" date="1997" name="Nature">
        <title>The complete genome sequence of the gastric pathogen Helicobacter pylori.</title>
        <authorList>
            <person name="Tomb J.-F."/>
            <person name="White O."/>
            <person name="Kerlavage A.R."/>
            <person name="Clayton R.A."/>
            <person name="Sutton G.G."/>
            <person name="Fleischmann R.D."/>
            <person name="Ketchum K.A."/>
            <person name="Klenk H.-P."/>
            <person name="Gill S.R."/>
            <person name="Dougherty B.A."/>
            <person name="Nelson K.E."/>
            <person name="Quackenbush J."/>
            <person name="Zhou L."/>
            <person name="Kirkness E.F."/>
            <person name="Peterson S.N."/>
            <person name="Loftus B.J."/>
            <person name="Richardson D.L."/>
            <person name="Dodson R.J."/>
            <person name="Khalak H.G."/>
            <person name="Glodek A."/>
            <person name="McKenney K."/>
            <person name="FitzGerald L.M."/>
            <person name="Lee N."/>
            <person name="Adams M.D."/>
            <person name="Hickey E.K."/>
            <person name="Berg D.E."/>
            <person name="Gocayne J.D."/>
            <person name="Utterback T.R."/>
            <person name="Peterson J.D."/>
            <person name="Kelley J.M."/>
            <person name="Cotton M.D."/>
            <person name="Weidman J.F."/>
            <person name="Fujii C."/>
            <person name="Bowman C."/>
            <person name="Watthey L."/>
            <person name="Wallin E."/>
            <person name="Hayes W.S."/>
            <person name="Borodovsky M."/>
            <person name="Karp P.D."/>
            <person name="Smith H.O."/>
            <person name="Fraser C.M."/>
            <person name="Venter J.C."/>
        </authorList>
    </citation>
    <scope>NUCLEOTIDE SEQUENCE [LARGE SCALE GENOMIC DNA]</scope>
    <source>
        <strain>ATCC 700392 / 26695</strain>
    </source>
</reference>
<feature type="chain" id="PRO_0000090737" description="Phosphatidate cytidylyltransferase">
    <location>
        <begin position="1"/>
        <end position="266"/>
    </location>
</feature>
<feature type="transmembrane region" description="Helical" evidence="2">
    <location>
        <begin position="16"/>
        <end position="36"/>
    </location>
</feature>
<feature type="transmembrane region" description="Helical" evidence="2">
    <location>
        <begin position="52"/>
        <end position="72"/>
    </location>
</feature>
<feature type="transmembrane region" description="Helical" evidence="2">
    <location>
        <begin position="78"/>
        <end position="98"/>
    </location>
</feature>
<feature type="transmembrane region" description="Helical" evidence="2">
    <location>
        <begin position="101"/>
        <end position="121"/>
    </location>
</feature>
<feature type="transmembrane region" description="Helical" evidence="2">
    <location>
        <begin position="125"/>
        <end position="145"/>
    </location>
</feature>
<feature type="transmembrane region" description="Helical" evidence="2">
    <location>
        <begin position="164"/>
        <end position="184"/>
    </location>
</feature>
<feature type="transmembrane region" description="Helical" evidence="2">
    <location>
        <begin position="186"/>
        <end position="206"/>
    </location>
</feature>
<feature type="transmembrane region" description="Helical" evidence="2">
    <location>
        <begin position="237"/>
        <end position="257"/>
    </location>
</feature>
<organism>
    <name type="scientific">Helicobacter pylori (strain ATCC 700392 / 26695)</name>
    <name type="common">Campylobacter pylori</name>
    <dbReference type="NCBI Taxonomy" id="85962"/>
    <lineage>
        <taxon>Bacteria</taxon>
        <taxon>Pseudomonadati</taxon>
        <taxon>Campylobacterota</taxon>
        <taxon>Epsilonproteobacteria</taxon>
        <taxon>Campylobacterales</taxon>
        <taxon>Helicobacteraceae</taxon>
        <taxon>Helicobacter</taxon>
    </lineage>
</organism>
<accession>O25004</accession>
<gene>
    <name type="primary">cdsA</name>
    <name type="ordered locus">HP_0215</name>
</gene>
<name>CDSA_HELPY</name>
<evidence type="ECO:0000250" key="1"/>
<evidence type="ECO:0000255" key="2"/>
<evidence type="ECO:0000305" key="3"/>
<keyword id="KW-0997">Cell inner membrane</keyword>
<keyword id="KW-1003">Cell membrane</keyword>
<keyword id="KW-0444">Lipid biosynthesis</keyword>
<keyword id="KW-0443">Lipid metabolism</keyword>
<keyword id="KW-0472">Membrane</keyword>
<keyword id="KW-0548">Nucleotidyltransferase</keyword>
<keyword id="KW-0594">Phospholipid biosynthesis</keyword>
<keyword id="KW-1208">Phospholipid metabolism</keyword>
<keyword id="KW-1185">Reference proteome</keyword>
<keyword id="KW-0808">Transferase</keyword>
<keyword id="KW-0812">Transmembrane</keyword>
<keyword id="KW-1133">Transmembrane helix</keyword>
<sequence>MKEELFKEKSRYITGFVLIIVADLILYADNLLLFWAVLGGIYAVGFSEALRLFQVKASFSLYLILVLSWVAAYFNGRPIECALISAMVMASVIAYQKAHHSEAILPFLYPGVGFFALFGVYKDFGAVAIIWLLVVVVASDVGAFFGGKLLGKTPFTPTSPNKTLEGALIGVVLASVLGSFVGMGKLSGGFFMALFFSFLIALVAVFGDLYESYLKRKVGIKDSGKILPGHGGVLDRLDSMLFGALGLHALLYFLEIWKETAVFLGD</sequence>
<dbReference type="EC" id="2.7.7.41"/>
<dbReference type="EMBL" id="AE000511">
    <property type="protein sequence ID" value="AAD07283.1"/>
    <property type="molecule type" value="Genomic_DNA"/>
</dbReference>
<dbReference type="PIR" id="G64546">
    <property type="entry name" value="G64546"/>
</dbReference>
<dbReference type="RefSeq" id="NP_207013.1">
    <property type="nucleotide sequence ID" value="NC_000915.1"/>
</dbReference>
<dbReference type="RefSeq" id="WP_000656886.1">
    <property type="nucleotide sequence ID" value="NC_018939.1"/>
</dbReference>
<dbReference type="SMR" id="O25004"/>
<dbReference type="FunCoup" id="O25004">
    <property type="interactions" value="290"/>
</dbReference>
<dbReference type="STRING" id="85962.HP_0215"/>
<dbReference type="PaxDb" id="85962-C694_01085"/>
<dbReference type="EnsemblBacteria" id="AAD07283">
    <property type="protein sequence ID" value="AAD07283"/>
    <property type="gene ID" value="HP_0215"/>
</dbReference>
<dbReference type="KEGG" id="heo:C694_01085"/>
<dbReference type="KEGG" id="hpy:HP_0215"/>
<dbReference type="PATRIC" id="fig|85962.47.peg.233"/>
<dbReference type="eggNOG" id="COG0575">
    <property type="taxonomic scope" value="Bacteria"/>
</dbReference>
<dbReference type="InParanoid" id="O25004"/>
<dbReference type="OrthoDB" id="9799199at2"/>
<dbReference type="PhylomeDB" id="O25004"/>
<dbReference type="UniPathway" id="UPA00557">
    <property type="reaction ID" value="UER00614"/>
</dbReference>
<dbReference type="Proteomes" id="UP000000429">
    <property type="component" value="Chromosome"/>
</dbReference>
<dbReference type="GO" id="GO:0005886">
    <property type="term" value="C:plasma membrane"/>
    <property type="evidence" value="ECO:0007669"/>
    <property type="project" value="UniProtKB-SubCell"/>
</dbReference>
<dbReference type="GO" id="GO:0004605">
    <property type="term" value="F:phosphatidate cytidylyltransferase activity"/>
    <property type="evidence" value="ECO:0007669"/>
    <property type="project" value="UniProtKB-EC"/>
</dbReference>
<dbReference type="GO" id="GO:0016024">
    <property type="term" value="P:CDP-diacylglycerol biosynthetic process"/>
    <property type="evidence" value="ECO:0007669"/>
    <property type="project" value="UniProtKB-UniPathway"/>
</dbReference>
<dbReference type="InterPro" id="IPR000374">
    <property type="entry name" value="PC_trans"/>
</dbReference>
<dbReference type="PANTHER" id="PTHR47101:SF1">
    <property type="entry name" value="PHOSPHATIDATE CYTIDYLYLTRANSFERASE 4, CHLOROPLASTIC"/>
    <property type="match status" value="1"/>
</dbReference>
<dbReference type="PANTHER" id="PTHR47101">
    <property type="entry name" value="PHOSPHATIDATE CYTIDYLYLTRANSFERASE 5, CHLOROPLASTIC"/>
    <property type="match status" value="1"/>
</dbReference>
<dbReference type="Pfam" id="PF01148">
    <property type="entry name" value="CTP_transf_1"/>
    <property type="match status" value="1"/>
</dbReference>
<dbReference type="PROSITE" id="PS01315">
    <property type="entry name" value="CDS"/>
    <property type="match status" value="1"/>
</dbReference>